<keyword id="KW-0028">Amino-acid biosynthesis</keyword>
<keyword id="KW-0055">Arginine biosynthesis</keyword>
<keyword id="KW-0963">Cytoplasm</keyword>
<keyword id="KW-0456">Lyase</keyword>
<comment type="catalytic activity">
    <reaction evidence="1">
        <text>2-(N(omega)-L-arginino)succinate = fumarate + L-arginine</text>
        <dbReference type="Rhea" id="RHEA:24020"/>
        <dbReference type="ChEBI" id="CHEBI:29806"/>
        <dbReference type="ChEBI" id="CHEBI:32682"/>
        <dbReference type="ChEBI" id="CHEBI:57472"/>
        <dbReference type="EC" id="4.3.2.1"/>
    </reaction>
</comment>
<comment type="pathway">
    <text evidence="1">Amino-acid biosynthesis; L-arginine biosynthesis; L-arginine from L-ornithine and carbamoyl phosphate: step 3/3.</text>
</comment>
<comment type="subcellular location">
    <subcellularLocation>
        <location evidence="1">Cytoplasm</location>
    </subcellularLocation>
</comment>
<comment type="similarity">
    <text evidence="1">Belongs to the lyase 1 family. Argininosuccinate lyase subfamily.</text>
</comment>
<name>ARLY_HYDS0</name>
<evidence type="ECO:0000255" key="1">
    <source>
        <dbReference type="HAMAP-Rule" id="MF_00006"/>
    </source>
</evidence>
<accession>B4U6T9</accession>
<gene>
    <name evidence="1" type="primary">argH</name>
    <name type="ordered locus">HY04AAS1_0158</name>
</gene>
<reference key="1">
    <citation type="journal article" date="2009" name="J. Bacteriol.">
        <title>Complete and draft genome sequences of six members of the Aquificales.</title>
        <authorList>
            <person name="Reysenbach A.-L."/>
            <person name="Hamamura N."/>
            <person name="Podar M."/>
            <person name="Griffiths E."/>
            <person name="Ferreira S."/>
            <person name="Hochstein R."/>
            <person name="Heidelberg J."/>
            <person name="Johnson J."/>
            <person name="Mead D."/>
            <person name="Pohorille A."/>
            <person name="Sarmiento M."/>
            <person name="Schweighofer K."/>
            <person name="Seshadri R."/>
            <person name="Voytek M.A."/>
        </authorList>
    </citation>
    <scope>NUCLEOTIDE SEQUENCE [LARGE SCALE GENOMIC DNA]</scope>
    <source>
        <strain>Y04AAS1</strain>
    </source>
</reference>
<feature type="chain" id="PRO_1000116327" description="Argininosuccinate lyase">
    <location>
        <begin position="1"/>
        <end position="458"/>
    </location>
</feature>
<organism>
    <name type="scientific">Hydrogenobaculum sp. (strain Y04AAS1)</name>
    <dbReference type="NCBI Taxonomy" id="380749"/>
    <lineage>
        <taxon>Bacteria</taxon>
        <taxon>Pseudomonadati</taxon>
        <taxon>Aquificota</taxon>
        <taxon>Aquificia</taxon>
        <taxon>Aquificales</taxon>
        <taxon>Aquificaceae</taxon>
        <taxon>Hydrogenobaculum</taxon>
    </lineage>
</organism>
<protein>
    <recommendedName>
        <fullName evidence="1">Argininosuccinate lyase</fullName>
        <shortName evidence="1">ASAL</shortName>
        <ecNumber evidence="1">4.3.2.1</ecNumber>
    </recommendedName>
    <alternativeName>
        <fullName evidence="1">Arginosuccinase</fullName>
    </alternativeName>
</protein>
<proteinExistence type="inferred from homology"/>
<sequence length="458" mass="52561">MSKAWSGRFKEDTSKDVELFTESISFDKALAMYDLEQDFAHLEALLKAGVISKDSYENIKSGLKKIKQEIEKNEFYFDISKEDIHMNIESRLYELIGEDAKKLHTGRSRNDQVNTDLRLYLKDHILKIFELLKALKQQLVLKAKEYEDLIMPGYTHLQRAQPVLVAHYLLSFKEAFLRDSQRLIDAYRRIDTLTLGSGALAGADFPLDRFLEASILNFSKISRNSMDAVADRDFAIEYMFCLSSIAMHLSRMAEDFIIFNTEEFKFIDLPDSLCTGSSIMPQKKNPDVLELIRGKAGRVYANLINLMVNLKGLPMTYNRDLQEDKEPIFDATNTILNSLKMMILIIKDIRFRQNIEAGNLLLATDLANYLVEKNIPFREAHHIVGNIVAYAIENQKPLESLTKEELNNFSKAFDKDAKDIISKESSILRKKTYGSTNKDFVKKQIDLSSSEESIDKNL</sequence>
<dbReference type="EC" id="4.3.2.1" evidence="1"/>
<dbReference type="EMBL" id="CP001130">
    <property type="protein sequence ID" value="ACG56850.1"/>
    <property type="molecule type" value="Genomic_DNA"/>
</dbReference>
<dbReference type="RefSeq" id="WP_012513207.1">
    <property type="nucleotide sequence ID" value="NC_011126.1"/>
</dbReference>
<dbReference type="SMR" id="B4U6T9"/>
<dbReference type="STRING" id="380749.HY04AAS1_0158"/>
<dbReference type="KEGG" id="hya:HY04AAS1_0158"/>
<dbReference type="eggNOG" id="COG0165">
    <property type="taxonomic scope" value="Bacteria"/>
</dbReference>
<dbReference type="HOGENOM" id="CLU_027272_2_3_0"/>
<dbReference type="OrthoDB" id="9769623at2"/>
<dbReference type="UniPathway" id="UPA00068">
    <property type="reaction ID" value="UER00114"/>
</dbReference>
<dbReference type="GO" id="GO:0005829">
    <property type="term" value="C:cytosol"/>
    <property type="evidence" value="ECO:0007669"/>
    <property type="project" value="TreeGrafter"/>
</dbReference>
<dbReference type="GO" id="GO:0004056">
    <property type="term" value="F:argininosuccinate lyase activity"/>
    <property type="evidence" value="ECO:0007669"/>
    <property type="project" value="UniProtKB-UniRule"/>
</dbReference>
<dbReference type="GO" id="GO:0042450">
    <property type="term" value="P:arginine biosynthetic process via ornithine"/>
    <property type="evidence" value="ECO:0007669"/>
    <property type="project" value="InterPro"/>
</dbReference>
<dbReference type="GO" id="GO:0006526">
    <property type="term" value="P:L-arginine biosynthetic process"/>
    <property type="evidence" value="ECO:0007669"/>
    <property type="project" value="UniProtKB-UniRule"/>
</dbReference>
<dbReference type="CDD" id="cd01359">
    <property type="entry name" value="Argininosuccinate_lyase"/>
    <property type="match status" value="1"/>
</dbReference>
<dbReference type="FunFam" id="1.10.275.10:FF:000002">
    <property type="entry name" value="Argininosuccinate lyase"/>
    <property type="match status" value="1"/>
</dbReference>
<dbReference type="FunFam" id="1.10.40.30:FF:000001">
    <property type="entry name" value="Argininosuccinate lyase"/>
    <property type="match status" value="1"/>
</dbReference>
<dbReference type="FunFam" id="1.20.200.10:FF:000015">
    <property type="entry name" value="argininosuccinate lyase isoform X2"/>
    <property type="match status" value="1"/>
</dbReference>
<dbReference type="Gene3D" id="1.10.40.30">
    <property type="entry name" value="Fumarase/aspartase (C-terminal domain)"/>
    <property type="match status" value="1"/>
</dbReference>
<dbReference type="Gene3D" id="1.20.200.10">
    <property type="entry name" value="Fumarase/aspartase (Central domain)"/>
    <property type="match status" value="1"/>
</dbReference>
<dbReference type="Gene3D" id="1.10.275.10">
    <property type="entry name" value="Fumarase/aspartase (N-terminal domain)"/>
    <property type="match status" value="1"/>
</dbReference>
<dbReference type="HAMAP" id="MF_00006">
    <property type="entry name" value="Arg_succ_lyase"/>
    <property type="match status" value="1"/>
</dbReference>
<dbReference type="InterPro" id="IPR029419">
    <property type="entry name" value="Arg_succ_lyase_C"/>
</dbReference>
<dbReference type="InterPro" id="IPR009049">
    <property type="entry name" value="Argininosuccinate_lyase"/>
</dbReference>
<dbReference type="InterPro" id="IPR024083">
    <property type="entry name" value="Fumarase/histidase_N"/>
</dbReference>
<dbReference type="InterPro" id="IPR020557">
    <property type="entry name" value="Fumarate_lyase_CS"/>
</dbReference>
<dbReference type="InterPro" id="IPR000362">
    <property type="entry name" value="Fumarate_lyase_fam"/>
</dbReference>
<dbReference type="InterPro" id="IPR022761">
    <property type="entry name" value="Fumarate_lyase_N"/>
</dbReference>
<dbReference type="InterPro" id="IPR008948">
    <property type="entry name" value="L-Aspartase-like"/>
</dbReference>
<dbReference type="NCBIfam" id="TIGR00838">
    <property type="entry name" value="argH"/>
    <property type="match status" value="1"/>
</dbReference>
<dbReference type="PANTHER" id="PTHR43814">
    <property type="entry name" value="ARGININOSUCCINATE LYASE"/>
    <property type="match status" value="1"/>
</dbReference>
<dbReference type="PANTHER" id="PTHR43814:SF1">
    <property type="entry name" value="ARGININOSUCCINATE LYASE"/>
    <property type="match status" value="1"/>
</dbReference>
<dbReference type="Pfam" id="PF14698">
    <property type="entry name" value="ASL_C2"/>
    <property type="match status" value="1"/>
</dbReference>
<dbReference type="Pfam" id="PF00206">
    <property type="entry name" value="Lyase_1"/>
    <property type="match status" value="1"/>
</dbReference>
<dbReference type="PRINTS" id="PR00145">
    <property type="entry name" value="ARGSUCLYASE"/>
</dbReference>
<dbReference type="PRINTS" id="PR00149">
    <property type="entry name" value="FUMRATELYASE"/>
</dbReference>
<dbReference type="SUPFAM" id="SSF48557">
    <property type="entry name" value="L-aspartase-like"/>
    <property type="match status" value="1"/>
</dbReference>
<dbReference type="PROSITE" id="PS00163">
    <property type="entry name" value="FUMARATE_LYASES"/>
    <property type="match status" value="1"/>
</dbReference>